<reference key="1">
    <citation type="journal article" date="2008" name="Environ. Microbiol.">
        <title>The genome of Erwinia tasmaniensis strain Et1/99, a non-pathogenic bacterium in the genus Erwinia.</title>
        <authorList>
            <person name="Kube M."/>
            <person name="Migdoll A.M."/>
            <person name="Mueller I."/>
            <person name="Kuhl H."/>
            <person name="Beck A."/>
            <person name="Reinhardt R."/>
            <person name="Geider K."/>
        </authorList>
    </citation>
    <scope>NUCLEOTIDE SEQUENCE [LARGE SCALE GENOMIC DNA]</scope>
    <source>
        <strain>DSM 17950 / CFBP 7177 / CIP 109463 / NCPPB 4357 / Et1/99</strain>
    </source>
</reference>
<sequence>MRLAQLSHESLNFPPPDRALREPNGLLAMGGDLSPQRLLNAYHRGIFPWFAAGDPILWWSPDPRAILLPQHFHLSRSMKRFHQKSPYRVTLNQRFRQVIEGCASDRQEGTWITYEVKLAWQRLHELGHAHSIEVWQDEELVGGMYGLALGQIFCGESMFSQGENASKTALLVFSRYFLQQGGKLIDCQVLNPHTQSLGAQEIPRASYLSYLHSLAFRPLSSECWSPQRLF</sequence>
<dbReference type="EC" id="2.3.2.6" evidence="1"/>
<dbReference type="EMBL" id="CU468135">
    <property type="protein sequence ID" value="CAO97205.1"/>
    <property type="molecule type" value="Genomic_DNA"/>
</dbReference>
<dbReference type="RefSeq" id="WP_012441875.1">
    <property type="nucleotide sequence ID" value="NC_010694.1"/>
</dbReference>
<dbReference type="SMR" id="B2VC63"/>
<dbReference type="STRING" id="465817.ETA_21590"/>
<dbReference type="KEGG" id="eta:ETA_21590"/>
<dbReference type="eggNOG" id="COG2360">
    <property type="taxonomic scope" value="Bacteria"/>
</dbReference>
<dbReference type="HOGENOM" id="CLU_075045_0_0_6"/>
<dbReference type="OrthoDB" id="9790282at2"/>
<dbReference type="Proteomes" id="UP000001726">
    <property type="component" value="Chromosome"/>
</dbReference>
<dbReference type="GO" id="GO:0005737">
    <property type="term" value="C:cytoplasm"/>
    <property type="evidence" value="ECO:0007669"/>
    <property type="project" value="UniProtKB-SubCell"/>
</dbReference>
<dbReference type="GO" id="GO:0008914">
    <property type="term" value="F:leucyl-tRNA--protein transferase activity"/>
    <property type="evidence" value="ECO:0007669"/>
    <property type="project" value="UniProtKB-UniRule"/>
</dbReference>
<dbReference type="GO" id="GO:0030163">
    <property type="term" value="P:protein catabolic process"/>
    <property type="evidence" value="ECO:0007669"/>
    <property type="project" value="UniProtKB-UniRule"/>
</dbReference>
<dbReference type="FunFam" id="3.30.70.3550:FF:000001">
    <property type="entry name" value="Leucyl/phenylalanyl-tRNA--protein transferase"/>
    <property type="match status" value="1"/>
</dbReference>
<dbReference type="FunFam" id="3.40.630.70:FF:000001">
    <property type="entry name" value="Leucyl/phenylalanyl-tRNA--protein transferase"/>
    <property type="match status" value="1"/>
</dbReference>
<dbReference type="Gene3D" id="3.40.630.70">
    <property type="entry name" value="Leucyl/phenylalanyl-tRNA-protein transferase, C-terminal domain"/>
    <property type="match status" value="1"/>
</dbReference>
<dbReference type="Gene3D" id="3.30.70.3550">
    <property type="entry name" value="Leucyl/phenylalanyl-tRNA-protein transferase, N-terminal domain"/>
    <property type="match status" value="1"/>
</dbReference>
<dbReference type="HAMAP" id="MF_00688">
    <property type="entry name" value="Leu_Phe_trans"/>
    <property type="match status" value="1"/>
</dbReference>
<dbReference type="InterPro" id="IPR016181">
    <property type="entry name" value="Acyl_CoA_acyltransferase"/>
</dbReference>
<dbReference type="InterPro" id="IPR004616">
    <property type="entry name" value="Leu/Phe-tRNA_Trfase"/>
</dbReference>
<dbReference type="InterPro" id="IPR042203">
    <property type="entry name" value="Leu/Phe-tRNA_Trfase_C"/>
</dbReference>
<dbReference type="InterPro" id="IPR042221">
    <property type="entry name" value="Leu/Phe-tRNA_Trfase_N"/>
</dbReference>
<dbReference type="NCBIfam" id="TIGR00667">
    <property type="entry name" value="aat"/>
    <property type="match status" value="1"/>
</dbReference>
<dbReference type="PANTHER" id="PTHR30098">
    <property type="entry name" value="LEUCYL/PHENYLALANYL-TRNA--PROTEIN TRANSFERASE"/>
    <property type="match status" value="1"/>
</dbReference>
<dbReference type="PANTHER" id="PTHR30098:SF2">
    <property type="entry name" value="LEUCYL_PHENYLALANYL-TRNA--PROTEIN TRANSFERASE"/>
    <property type="match status" value="1"/>
</dbReference>
<dbReference type="Pfam" id="PF03588">
    <property type="entry name" value="Leu_Phe_trans"/>
    <property type="match status" value="1"/>
</dbReference>
<dbReference type="SUPFAM" id="SSF55729">
    <property type="entry name" value="Acyl-CoA N-acyltransferases (Nat)"/>
    <property type="match status" value="1"/>
</dbReference>
<protein>
    <recommendedName>
        <fullName evidence="1">Leucyl/phenylalanyl-tRNA--protein transferase</fullName>
        <ecNumber evidence="1">2.3.2.6</ecNumber>
    </recommendedName>
    <alternativeName>
        <fullName evidence="1">L/F-transferase</fullName>
    </alternativeName>
    <alternativeName>
        <fullName evidence="1">Leucyltransferase</fullName>
    </alternativeName>
    <alternativeName>
        <fullName evidence="1">Phenyalanyltransferase</fullName>
    </alternativeName>
</protein>
<accession>B2VC63</accession>
<proteinExistence type="inferred from homology"/>
<keyword id="KW-0012">Acyltransferase</keyword>
<keyword id="KW-0963">Cytoplasm</keyword>
<keyword id="KW-1185">Reference proteome</keyword>
<keyword id="KW-0808">Transferase</keyword>
<name>LFTR_ERWT9</name>
<evidence type="ECO:0000255" key="1">
    <source>
        <dbReference type="HAMAP-Rule" id="MF_00688"/>
    </source>
</evidence>
<comment type="function">
    <text evidence="1">Functions in the N-end rule pathway of protein degradation where it conjugates Leu, Phe and, less efficiently, Met from aminoacyl-tRNAs to the N-termini of proteins containing an N-terminal arginine or lysine.</text>
</comment>
<comment type="catalytic activity">
    <reaction evidence="1">
        <text>N-terminal L-lysyl-[protein] + L-leucyl-tRNA(Leu) = N-terminal L-leucyl-L-lysyl-[protein] + tRNA(Leu) + H(+)</text>
        <dbReference type="Rhea" id="RHEA:12340"/>
        <dbReference type="Rhea" id="RHEA-COMP:9613"/>
        <dbReference type="Rhea" id="RHEA-COMP:9622"/>
        <dbReference type="Rhea" id="RHEA-COMP:12670"/>
        <dbReference type="Rhea" id="RHEA-COMP:12671"/>
        <dbReference type="ChEBI" id="CHEBI:15378"/>
        <dbReference type="ChEBI" id="CHEBI:65249"/>
        <dbReference type="ChEBI" id="CHEBI:78442"/>
        <dbReference type="ChEBI" id="CHEBI:78494"/>
        <dbReference type="ChEBI" id="CHEBI:133043"/>
        <dbReference type="EC" id="2.3.2.6"/>
    </reaction>
</comment>
<comment type="catalytic activity">
    <reaction evidence="1">
        <text>N-terminal L-arginyl-[protein] + L-leucyl-tRNA(Leu) = N-terminal L-leucyl-L-arginyl-[protein] + tRNA(Leu) + H(+)</text>
        <dbReference type="Rhea" id="RHEA:50416"/>
        <dbReference type="Rhea" id="RHEA-COMP:9613"/>
        <dbReference type="Rhea" id="RHEA-COMP:9622"/>
        <dbReference type="Rhea" id="RHEA-COMP:12672"/>
        <dbReference type="Rhea" id="RHEA-COMP:12673"/>
        <dbReference type="ChEBI" id="CHEBI:15378"/>
        <dbReference type="ChEBI" id="CHEBI:64719"/>
        <dbReference type="ChEBI" id="CHEBI:78442"/>
        <dbReference type="ChEBI" id="CHEBI:78494"/>
        <dbReference type="ChEBI" id="CHEBI:133044"/>
        <dbReference type="EC" id="2.3.2.6"/>
    </reaction>
</comment>
<comment type="catalytic activity">
    <reaction evidence="1">
        <text>L-phenylalanyl-tRNA(Phe) + an N-terminal L-alpha-aminoacyl-[protein] = an N-terminal L-phenylalanyl-L-alpha-aminoacyl-[protein] + tRNA(Phe)</text>
        <dbReference type="Rhea" id="RHEA:43632"/>
        <dbReference type="Rhea" id="RHEA-COMP:9668"/>
        <dbReference type="Rhea" id="RHEA-COMP:9699"/>
        <dbReference type="Rhea" id="RHEA-COMP:10636"/>
        <dbReference type="Rhea" id="RHEA-COMP:10637"/>
        <dbReference type="ChEBI" id="CHEBI:78442"/>
        <dbReference type="ChEBI" id="CHEBI:78531"/>
        <dbReference type="ChEBI" id="CHEBI:78597"/>
        <dbReference type="ChEBI" id="CHEBI:83561"/>
        <dbReference type="EC" id="2.3.2.6"/>
    </reaction>
</comment>
<comment type="subcellular location">
    <subcellularLocation>
        <location evidence="1">Cytoplasm</location>
    </subcellularLocation>
</comment>
<comment type="similarity">
    <text evidence="1">Belongs to the L/F-transferase family.</text>
</comment>
<gene>
    <name evidence="1" type="primary">aat</name>
    <name type="ordered locus">ETA_21590</name>
</gene>
<organism>
    <name type="scientific">Erwinia tasmaniensis (strain DSM 17950 / CFBP 7177 / CIP 109463 / NCPPB 4357 / Et1/99)</name>
    <dbReference type="NCBI Taxonomy" id="465817"/>
    <lineage>
        <taxon>Bacteria</taxon>
        <taxon>Pseudomonadati</taxon>
        <taxon>Pseudomonadota</taxon>
        <taxon>Gammaproteobacteria</taxon>
        <taxon>Enterobacterales</taxon>
        <taxon>Erwiniaceae</taxon>
        <taxon>Erwinia</taxon>
    </lineage>
</organism>
<feature type="chain" id="PRO_1000131926" description="Leucyl/phenylalanyl-tRNA--protein transferase">
    <location>
        <begin position="1"/>
        <end position="230"/>
    </location>
</feature>